<dbReference type="EMBL" id="AK044999">
    <property type="protein sequence ID" value="BAC32178.1"/>
    <property type="molecule type" value="mRNA"/>
</dbReference>
<dbReference type="EMBL" id="AK081388">
    <property type="protein sequence ID" value="BAC38209.1"/>
    <property type="molecule type" value="mRNA"/>
</dbReference>
<dbReference type="EMBL" id="AK168344">
    <property type="protein sequence ID" value="BAE40281.1"/>
    <property type="molecule type" value="mRNA"/>
</dbReference>
<dbReference type="EMBL" id="AL627238">
    <property type="status" value="NOT_ANNOTATED_CDS"/>
    <property type="molecule type" value="Genomic_DNA"/>
</dbReference>
<dbReference type="EMBL" id="BC012391">
    <property type="protein sequence ID" value="AAH12391.1"/>
    <property type="molecule type" value="mRNA"/>
</dbReference>
<dbReference type="CCDS" id="CCDS18449.1"/>
<dbReference type="RefSeq" id="NP_081526.1">
    <property type="nucleotide sequence ID" value="NM_027250.4"/>
</dbReference>
<dbReference type="SMR" id="Q921H9"/>
<dbReference type="BioGRID" id="213740">
    <property type="interactions" value="3"/>
</dbReference>
<dbReference type="FunCoup" id="Q921H9">
    <property type="interactions" value="1675"/>
</dbReference>
<dbReference type="STRING" id="10090.ENSMUSP00000114906"/>
<dbReference type="GlyGen" id="Q921H9">
    <property type="glycosylation" value="1 site, 1 N-linked glycan (1 site)"/>
</dbReference>
<dbReference type="iPTMnet" id="Q921H9"/>
<dbReference type="PhosphoSitePlus" id="Q921H9"/>
<dbReference type="SwissPalm" id="Q921H9"/>
<dbReference type="jPOST" id="Q921H9"/>
<dbReference type="PaxDb" id="10090-ENSMUSP00000114906"/>
<dbReference type="PeptideAtlas" id="Q921H9"/>
<dbReference type="ProteomicsDB" id="279133"/>
<dbReference type="Pumba" id="Q921H9"/>
<dbReference type="Antibodypedia" id="33027">
    <property type="antibodies" value="99 antibodies from 15 providers"/>
</dbReference>
<dbReference type="DNASU" id="69893"/>
<dbReference type="Ensembl" id="ENSMUST00000131656.2">
    <property type="protein sequence ID" value="ENSMUSP00000114906.2"/>
    <property type="gene ID" value="ENSMUSG00000048351.15"/>
</dbReference>
<dbReference type="GeneID" id="69893"/>
<dbReference type="KEGG" id="mmu:69893"/>
<dbReference type="UCSC" id="uc008uaz.1">
    <property type="organism name" value="mouse"/>
</dbReference>
<dbReference type="AGR" id="MGI:1917143"/>
<dbReference type="CTD" id="65260"/>
<dbReference type="MGI" id="MGI:1917143">
    <property type="gene designation" value="Coa7"/>
</dbReference>
<dbReference type="VEuPathDB" id="HostDB:ENSMUSG00000048351"/>
<dbReference type="eggNOG" id="KOG4014">
    <property type="taxonomic scope" value="Eukaryota"/>
</dbReference>
<dbReference type="GeneTree" id="ENSGT00390000004835"/>
<dbReference type="HOGENOM" id="CLU_000288_36_9_1"/>
<dbReference type="InParanoid" id="Q921H9"/>
<dbReference type="OMA" id="PGCINAG"/>
<dbReference type="OrthoDB" id="272077at2759"/>
<dbReference type="PhylomeDB" id="Q921H9"/>
<dbReference type="TreeFam" id="TF105805"/>
<dbReference type="BioGRID-ORCS" id="69893">
    <property type="hits" value="21 hits in 77 CRISPR screens"/>
</dbReference>
<dbReference type="PRO" id="PR:Q921H9"/>
<dbReference type="Proteomes" id="UP000000589">
    <property type="component" value="Chromosome 4"/>
</dbReference>
<dbReference type="RNAct" id="Q921H9">
    <property type="molecule type" value="protein"/>
</dbReference>
<dbReference type="Bgee" id="ENSMUSG00000048351">
    <property type="expression patterns" value="Expressed in yolk sac and 236 other cell types or tissues"/>
</dbReference>
<dbReference type="GO" id="GO:0005758">
    <property type="term" value="C:mitochondrial intermembrane space"/>
    <property type="evidence" value="ECO:0000250"/>
    <property type="project" value="UniProtKB"/>
</dbReference>
<dbReference type="GO" id="GO:0005654">
    <property type="term" value="C:nucleoplasm"/>
    <property type="evidence" value="ECO:0007669"/>
    <property type="project" value="Ensembl"/>
</dbReference>
<dbReference type="GO" id="GO:0015035">
    <property type="term" value="F:protein-disulfide reductase activity"/>
    <property type="evidence" value="ECO:0007669"/>
    <property type="project" value="Ensembl"/>
</dbReference>
<dbReference type="GO" id="GO:0008535">
    <property type="term" value="P:respiratory chain complex IV assembly"/>
    <property type="evidence" value="ECO:0007669"/>
    <property type="project" value="Ensembl"/>
</dbReference>
<dbReference type="FunFam" id="1.25.40.10:FF:000401">
    <property type="entry name" value="Cytochrome c oxidase assembly factor 7"/>
    <property type="match status" value="1"/>
</dbReference>
<dbReference type="Gene3D" id="1.25.40.10">
    <property type="entry name" value="Tetratricopeptide repeat domain"/>
    <property type="match status" value="1"/>
</dbReference>
<dbReference type="InterPro" id="IPR040239">
    <property type="entry name" value="HcpB-like"/>
</dbReference>
<dbReference type="InterPro" id="IPR006597">
    <property type="entry name" value="Sel1-like"/>
</dbReference>
<dbReference type="InterPro" id="IPR011990">
    <property type="entry name" value="TPR-like_helical_dom_sf"/>
</dbReference>
<dbReference type="PANTHER" id="PTHR13891">
    <property type="entry name" value="CYTOCHROME C OXIDASE ASSEMBLY FACTOR 7"/>
    <property type="match status" value="1"/>
</dbReference>
<dbReference type="PANTHER" id="PTHR13891:SF1">
    <property type="entry name" value="CYTOCHROME C OXIDASE ASSEMBLY FACTOR 7"/>
    <property type="match status" value="1"/>
</dbReference>
<dbReference type="Pfam" id="PF08238">
    <property type="entry name" value="Sel1"/>
    <property type="match status" value="4"/>
</dbReference>
<dbReference type="SMART" id="SM00671">
    <property type="entry name" value="SEL1"/>
    <property type="match status" value="5"/>
</dbReference>
<dbReference type="SUPFAM" id="SSF81901">
    <property type="entry name" value="HCP-like"/>
    <property type="match status" value="1"/>
</dbReference>
<sequence>MAGLVDFQDEEQVKSFLENMEVECHYQCYREKDPEGCYRLVDYLEGIQKNFDEAAKVLKFNCEKYGHGDSCYKLGAYYVTGKGGLTQDLKAASSCFLMACEKPGKKSVESCHNVGLLAHDGQVNEDGQPDLGKARDYYSRACDGGYAASCFNLSAMFLQGAPGFPKDMGLACKYSMKACDLGHVWACANASRMYKLGDGVDKDEAKAEVLKNRARQLHKEQQKNVQPLTFG</sequence>
<reference key="1">
    <citation type="journal article" date="2005" name="Science">
        <title>The transcriptional landscape of the mammalian genome.</title>
        <authorList>
            <person name="Carninci P."/>
            <person name="Kasukawa T."/>
            <person name="Katayama S."/>
            <person name="Gough J."/>
            <person name="Frith M.C."/>
            <person name="Maeda N."/>
            <person name="Oyama R."/>
            <person name="Ravasi T."/>
            <person name="Lenhard B."/>
            <person name="Wells C."/>
            <person name="Kodzius R."/>
            <person name="Shimokawa K."/>
            <person name="Bajic V.B."/>
            <person name="Brenner S.E."/>
            <person name="Batalov S."/>
            <person name="Forrest A.R."/>
            <person name="Zavolan M."/>
            <person name="Davis M.J."/>
            <person name="Wilming L.G."/>
            <person name="Aidinis V."/>
            <person name="Allen J.E."/>
            <person name="Ambesi-Impiombato A."/>
            <person name="Apweiler R."/>
            <person name="Aturaliya R.N."/>
            <person name="Bailey T.L."/>
            <person name="Bansal M."/>
            <person name="Baxter L."/>
            <person name="Beisel K.W."/>
            <person name="Bersano T."/>
            <person name="Bono H."/>
            <person name="Chalk A.M."/>
            <person name="Chiu K.P."/>
            <person name="Choudhary V."/>
            <person name="Christoffels A."/>
            <person name="Clutterbuck D.R."/>
            <person name="Crowe M.L."/>
            <person name="Dalla E."/>
            <person name="Dalrymple B.P."/>
            <person name="de Bono B."/>
            <person name="Della Gatta G."/>
            <person name="di Bernardo D."/>
            <person name="Down T."/>
            <person name="Engstrom P."/>
            <person name="Fagiolini M."/>
            <person name="Faulkner G."/>
            <person name="Fletcher C.F."/>
            <person name="Fukushima T."/>
            <person name="Furuno M."/>
            <person name="Futaki S."/>
            <person name="Gariboldi M."/>
            <person name="Georgii-Hemming P."/>
            <person name="Gingeras T.R."/>
            <person name="Gojobori T."/>
            <person name="Green R.E."/>
            <person name="Gustincich S."/>
            <person name="Harbers M."/>
            <person name="Hayashi Y."/>
            <person name="Hensch T.K."/>
            <person name="Hirokawa N."/>
            <person name="Hill D."/>
            <person name="Huminiecki L."/>
            <person name="Iacono M."/>
            <person name="Ikeo K."/>
            <person name="Iwama A."/>
            <person name="Ishikawa T."/>
            <person name="Jakt M."/>
            <person name="Kanapin A."/>
            <person name="Katoh M."/>
            <person name="Kawasawa Y."/>
            <person name="Kelso J."/>
            <person name="Kitamura H."/>
            <person name="Kitano H."/>
            <person name="Kollias G."/>
            <person name="Krishnan S.P."/>
            <person name="Kruger A."/>
            <person name="Kummerfeld S.K."/>
            <person name="Kurochkin I.V."/>
            <person name="Lareau L.F."/>
            <person name="Lazarevic D."/>
            <person name="Lipovich L."/>
            <person name="Liu J."/>
            <person name="Liuni S."/>
            <person name="McWilliam S."/>
            <person name="Madan Babu M."/>
            <person name="Madera M."/>
            <person name="Marchionni L."/>
            <person name="Matsuda H."/>
            <person name="Matsuzawa S."/>
            <person name="Miki H."/>
            <person name="Mignone F."/>
            <person name="Miyake S."/>
            <person name="Morris K."/>
            <person name="Mottagui-Tabar S."/>
            <person name="Mulder N."/>
            <person name="Nakano N."/>
            <person name="Nakauchi H."/>
            <person name="Ng P."/>
            <person name="Nilsson R."/>
            <person name="Nishiguchi S."/>
            <person name="Nishikawa S."/>
            <person name="Nori F."/>
            <person name="Ohara O."/>
            <person name="Okazaki Y."/>
            <person name="Orlando V."/>
            <person name="Pang K.C."/>
            <person name="Pavan W.J."/>
            <person name="Pavesi G."/>
            <person name="Pesole G."/>
            <person name="Petrovsky N."/>
            <person name="Piazza S."/>
            <person name="Reed J."/>
            <person name="Reid J.F."/>
            <person name="Ring B.Z."/>
            <person name="Ringwald M."/>
            <person name="Rost B."/>
            <person name="Ruan Y."/>
            <person name="Salzberg S.L."/>
            <person name="Sandelin A."/>
            <person name="Schneider C."/>
            <person name="Schoenbach C."/>
            <person name="Sekiguchi K."/>
            <person name="Semple C.A."/>
            <person name="Seno S."/>
            <person name="Sessa L."/>
            <person name="Sheng Y."/>
            <person name="Shibata Y."/>
            <person name="Shimada H."/>
            <person name="Shimada K."/>
            <person name="Silva D."/>
            <person name="Sinclair B."/>
            <person name="Sperling S."/>
            <person name="Stupka E."/>
            <person name="Sugiura K."/>
            <person name="Sultana R."/>
            <person name="Takenaka Y."/>
            <person name="Taki K."/>
            <person name="Tammoja K."/>
            <person name="Tan S.L."/>
            <person name="Tang S."/>
            <person name="Taylor M.S."/>
            <person name="Tegner J."/>
            <person name="Teichmann S.A."/>
            <person name="Ueda H.R."/>
            <person name="van Nimwegen E."/>
            <person name="Verardo R."/>
            <person name="Wei C.L."/>
            <person name="Yagi K."/>
            <person name="Yamanishi H."/>
            <person name="Zabarovsky E."/>
            <person name="Zhu S."/>
            <person name="Zimmer A."/>
            <person name="Hide W."/>
            <person name="Bult C."/>
            <person name="Grimmond S.M."/>
            <person name="Teasdale R.D."/>
            <person name="Liu E.T."/>
            <person name="Brusic V."/>
            <person name="Quackenbush J."/>
            <person name="Wahlestedt C."/>
            <person name="Mattick J.S."/>
            <person name="Hume D.A."/>
            <person name="Kai C."/>
            <person name="Sasaki D."/>
            <person name="Tomaru Y."/>
            <person name="Fukuda S."/>
            <person name="Kanamori-Katayama M."/>
            <person name="Suzuki M."/>
            <person name="Aoki J."/>
            <person name="Arakawa T."/>
            <person name="Iida J."/>
            <person name="Imamura K."/>
            <person name="Itoh M."/>
            <person name="Kato T."/>
            <person name="Kawaji H."/>
            <person name="Kawagashira N."/>
            <person name="Kawashima T."/>
            <person name="Kojima M."/>
            <person name="Kondo S."/>
            <person name="Konno H."/>
            <person name="Nakano K."/>
            <person name="Ninomiya N."/>
            <person name="Nishio T."/>
            <person name="Okada M."/>
            <person name="Plessy C."/>
            <person name="Shibata K."/>
            <person name="Shiraki T."/>
            <person name="Suzuki S."/>
            <person name="Tagami M."/>
            <person name="Waki K."/>
            <person name="Watahiki A."/>
            <person name="Okamura-Oho Y."/>
            <person name="Suzuki H."/>
            <person name="Kawai J."/>
            <person name="Hayashizaki Y."/>
        </authorList>
    </citation>
    <scope>NUCLEOTIDE SEQUENCE [LARGE SCALE MRNA]</scope>
    <source>
        <strain>BALB/cJ</strain>
        <strain>C57BL/6J</strain>
        <tissue>Embryo</tissue>
        <tissue>Head</tissue>
    </source>
</reference>
<reference key="2">
    <citation type="journal article" date="2009" name="PLoS Biol.">
        <title>Lineage-specific biology revealed by a finished genome assembly of the mouse.</title>
        <authorList>
            <person name="Church D.M."/>
            <person name="Goodstadt L."/>
            <person name="Hillier L.W."/>
            <person name="Zody M.C."/>
            <person name="Goldstein S."/>
            <person name="She X."/>
            <person name="Bult C.J."/>
            <person name="Agarwala R."/>
            <person name="Cherry J.L."/>
            <person name="DiCuccio M."/>
            <person name="Hlavina W."/>
            <person name="Kapustin Y."/>
            <person name="Meric P."/>
            <person name="Maglott D."/>
            <person name="Birtle Z."/>
            <person name="Marques A.C."/>
            <person name="Graves T."/>
            <person name="Zhou S."/>
            <person name="Teague B."/>
            <person name="Potamousis K."/>
            <person name="Churas C."/>
            <person name="Place M."/>
            <person name="Herschleb J."/>
            <person name="Runnheim R."/>
            <person name="Forrest D."/>
            <person name="Amos-Landgraf J."/>
            <person name="Schwartz D.C."/>
            <person name="Cheng Z."/>
            <person name="Lindblad-Toh K."/>
            <person name="Eichler E.E."/>
            <person name="Ponting C.P."/>
        </authorList>
    </citation>
    <scope>NUCLEOTIDE SEQUENCE [LARGE SCALE GENOMIC DNA]</scope>
    <source>
        <strain>C57BL/6J</strain>
    </source>
</reference>
<reference key="3">
    <citation type="journal article" date="2004" name="Genome Res.">
        <title>The status, quality, and expansion of the NIH full-length cDNA project: the Mammalian Gene Collection (MGC).</title>
        <authorList>
            <consortium name="The MGC Project Team"/>
        </authorList>
    </citation>
    <scope>NUCLEOTIDE SEQUENCE [LARGE SCALE MRNA]</scope>
    <source>
        <strain>FVB/N</strain>
        <tissue>Mammary tumor</tissue>
    </source>
</reference>
<reference key="4">
    <citation type="journal article" date="2010" name="Cell">
        <title>A tissue-specific atlas of mouse protein phosphorylation and expression.</title>
        <authorList>
            <person name="Huttlin E.L."/>
            <person name="Jedrychowski M.P."/>
            <person name="Elias J.E."/>
            <person name="Goswami T."/>
            <person name="Rad R."/>
            <person name="Beausoleil S.A."/>
            <person name="Villen J."/>
            <person name="Haas W."/>
            <person name="Sowa M.E."/>
            <person name="Gygi S.P."/>
        </authorList>
    </citation>
    <scope>IDENTIFICATION BY MASS SPECTROMETRY [LARGE SCALE ANALYSIS]</scope>
    <source>
        <tissue>Brain</tissue>
        <tissue>Brown adipose tissue</tissue>
        <tissue>Heart</tissue>
        <tissue>Kidney</tissue>
        <tissue>Liver</tissue>
        <tissue>Lung</tissue>
        <tissue>Pancreas</tissue>
        <tissue>Testis</tissue>
    </source>
</reference>
<organism>
    <name type="scientific">Mus musculus</name>
    <name type="common">Mouse</name>
    <dbReference type="NCBI Taxonomy" id="10090"/>
    <lineage>
        <taxon>Eukaryota</taxon>
        <taxon>Metazoa</taxon>
        <taxon>Chordata</taxon>
        <taxon>Craniata</taxon>
        <taxon>Vertebrata</taxon>
        <taxon>Euteleostomi</taxon>
        <taxon>Mammalia</taxon>
        <taxon>Eutheria</taxon>
        <taxon>Euarchontoglires</taxon>
        <taxon>Glires</taxon>
        <taxon>Rodentia</taxon>
        <taxon>Myomorpha</taxon>
        <taxon>Muroidea</taxon>
        <taxon>Muridae</taxon>
        <taxon>Murinae</taxon>
        <taxon>Mus</taxon>
        <taxon>Mus</taxon>
    </lineage>
</organism>
<feature type="initiator methionine" description="Removed" evidence="1">
    <location>
        <position position="1"/>
    </location>
</feature>
<feature type="chain" id="PRO_0000282365" description="Cytochrome c oxidase assembly factor 7">
    <location>
        <begin position="2"/>
        <end position="231"/>
    </location>
</feature>
<feature type="repeat" description="Sel1-like 1">
    <location>
        <begin position="34"/>
        <end position="66"/>
    </location>
</feature>
<feature type="repeat" description="Sel1-like 2">
    <location>
        <begin position="68"/>
        <end position="104"/>
    </location>
</feature>
<feature type="repeat" description="Sel1-like 3">
    <location>
        <begin position="108"/>
        <end position="146"/>
    </location>
</feature>
<feature type="repeat" description="Sel1-like 4">
    <location>
        <begin position="147"/>
        <end position="183"/>
    </location>
</feature>
<feature type="repeat" description="Sel1-like 5">
    <location>
        <begin position="184"/>
        <end position="219"/>
    </location>
</feature>
<feature type="modified residue" description="N-acetylalanine" evidence="1">
    <location>
        <position position="2"/>
    </location>
</feature>
<protein>
    <recommendedName>
        <fullName>Cytochrome c oxidase assembly factor 7</fullName>
    </recommendedName>
    <alternativeName>
        <fullName>Beta-lactamase hcp-like protein</fullName>
    </alternativeName>
    <alternativeName>
        <fullName>Respiratory chain assembly factor 1</fullName>
    </alternativeName>
    <alternativeName>
        <fullName>Sel1 repeat-containing protein 1</fullName>
    </alternativeName>
</protein>
<keyword id="KW-0007">Acetylation</keyword>
<keyword id="KW-0496">Mitochondrion</keyword>
<keyword id="KW-1185">Reference proteome</keyword>
<keyword id="KW-0677">Repeat</keyword>
<evidence type="ECO:0000250" key="1">
    <source>
        <dbReference type="UniProtKB" id="Q96BR5"/>
    </source>
</evidence>
<evidence type="ECO:0000305" key="2"/>
<gene>
    <name type="primary">Coa7</name>
    <name type="synonym">Selrc1</name>
</gene>
<comment type="function">
    <text evidence="1">Required for assembly of mitochondrial respiratory chain complex I and complex IV.</text>
</comment>
<comment type="subunit">
    <text evidence="1">Interacts with CHCHD4/MIA40 through transient intermolecular disulfide bonds.</text>
</comment>
<comment type="subcellular location">
    <subcellularLocation>
        <location evidence="1">Mitochondrion intermembrane space</location>
    </subcellularLocation>
    <text evidence="1">The import in the mitochondrion intermembrane space is mediated by CHCHD4/MIA40.</text>
</comment>
<comment type="similarity">
    <text evidence="2">Belongs to the hcp beta-lactamase family.</text>
</comment>
<proteinExistence type="evidence at protein level"/>
<name>COA7_MOUSE</name>
<accession>Q921H9</accession>